<gene>
    <name type="primary">dnaK</name>
    <name type="ordered locus">SPy_1760</name>
    <name type="ordered locus">M5005_Spy1498</name>
</gene>
<dbReference type="EMBL" id="AE004092">
    <property type="protein sequence ID" value="AAK34501.1"/>
    <property type="molecule type" value="Genomic_DNA"/>
</dbReference>
<dbReference type="EMBL" id="CP000017">
    <property type="protein sequence ID" value="AAZ52116.1"/>
    <property type="molecule type" value="Genomic_DNA"/>
</dbReference>
<dbReference type="RefSeq" id="NP_269780.1">
    <property type="nucleotide sequence ID" value="NC_002737.2"/>
</dbReference>
<dbReference type="SMR" id="P0C0C6"/>
<dbReference type="PaxDb" id="1314-HKU360_01553"/>
<dbReference type="KEGG" id="spy:SPy_1760"/>
<dbReference type="KEGG" id="spz:M5005_Spy1498"/>
<dbReference type="PATRIC" id="fig|160490.10.peg.1531"/>
<dbReference type="HOGENOM" id="CLU_005965_2_4_9"/>
<dbReference type="OMA" id="MGTDWKI"/>
<dbReference type="Proteomes" id="UP000000750">
    <property type="component" value="Chromosome"/>
</dbReference>
<dbReference type="GO" id="GO:0005524">
    <property type="term" value="F:ATP binding"/>
    <property type="evidence" value="ECO:0007669"/>
    <property type="project" value="UniProtKB-UniRule"/>
</dbReference>
<dbReference type="GO" id="GO:0140662">
    <property type="term" value="F:ATP-dependent protein folding chaperone"/>
    <property type="evidence" value="ECO:0007669"/>
    <property type="project" value="InterPro"/>
</dbReference>
<dbReference type="GO" id="GO:0051082">
    <property type="term" value="F:unfolded protein binding"/>
    <property type="evidence" value="ECO:0007669"/>
    <property type="project" value="InterPro"/>
</dbReference>
<dbReference type="CDD" id="cd10234">
    <property type="entry name" value="ASKHA_NBD_HSP70_DnaK-like"/>
    <property type="match status" value="1"/>
</dbReference>
<dbReference type="FunFam" id="2.60.34.10:FF:000014">
    <property type="entry name" value="Chaperone protein DnaK HSP70"/>
    <property type="match status" value="1"/>
</dbReference>
<dbReference type="FunFam" id="3.30.420.40:FF:000071">
    <property type="entry name" value="Molecular chaperone DnaK"/>
    <property type="match status" value="1"/>
</dbReference>
<dbReference type="FunFam" id="3.90.640.10:FF:000003">
    <property type="entry name" value="Molecular chaperone DnaK"/>
    <property type="match status" value="1"/>
</dbReference>
<dbReference type="Gene3D" id="1.20.1270.10">
    <property type="match status" value="1"/>
</dbReference>
<dbReference type="Gene3D" id="3.30.420.40">
    <property type="match status" value="2"/>
</dbReference>
<dbReference type="Gene3D" id="3.90.640.10">
    <property type="entry name" value="Actin, Chain A, domain 4"/>
    <property type="match status" value="1"/>
</dbReference>
<dbReference type="Gene3D" id="2.60.34.10">
    <property type="entry name" value="Substrate Binding Domain Of DNAk, Chain A, domain 1"/>
    <property type="match status" value="1"/>
</dbReference>
<dbReference type="HAMAP" id="MF_00332">
    <property type="entry name" value="DnaK"/>
    <property type="match status" value="1"/>
</dbReference>
<dbReference type="InterPro" id="IPR043129">
    <property type="entry name" value="ATPase_NBD"/>
</dbReference>
<dbReference type="InterPro" id="IPR012725">
    <property type="entry name" value="Chaperone_DnaK"/>
</dbReference>
<dbReference type="InterPro" id="IPR018181">
    <property type="entry name" value="Heat_shock_70_CS"/>
</dbReference>
<dbReference type="InterPro" id="IPR029048">
    <property type="entry name" value="HSP70_C_sf"/>
</dbReference>
<dbReference type="InterPro" id="IPR029047">
    <property type="entry name" value="HSP70_peptide-bd_sf"/>
</dbReference>
<dbReference type="InterPro" id="IPR013126">
    <property type="entry name" value="Hsp_70_fam"/>
</dbReference>
<dbReference type="NCBIfam" id="NF001413">
    <property type="entry name" value="PRK00290.1"/>
    <property type="match status" value="1"/>
</dbReference>
<dbReference type="NCBIfam" id="TIGR02350">
    <property type="entry name" value="prok_dnaK"/>
    <property type="match status" value="1"/>
</dbReference>
<dbReference type="PANTHER" id="PTHR19375">
    <property type="entry name" value="HEAT SHOCK PROTEIN 70KDA"/>
    <property type="match status" value="1"/>
</dbReference>
<dbReference type="Pfam" id="PF00012">
    <property type="entry name" value="HSP70"/>
    <property type="match status" value="1"/>
</dbReference>
<dbReference type="PRINTS" id="PR00301">
    <property type="entry name" value="HEATSHOCK70"/>
</dbReference>
<dbReference type="SUPFAM" id="SSF53067">
    <property type="entry name" value="Actin-like ATPase domain"/>
    <property type="match status" value="2"/>
</dbReference>
<dbReference type="SUPFAM" id="SSF100934">
    <property type="entry name" value="Heat shock protein 70kD (HSP70), C-terminal subdomain"/>
    <property type="match status" value="1"/>
</dbReference>
<dbReference type="SUPFAM" id="SSF100920">
    <property type="entry name" value="Heat shock protein 70kD (HSP70), peptide-binding domain"/>
    <property type="match status" value="1"/>
</dbReference>
<dbReference type="PROSITE" id="PS00297">
    <property type="entry name" value="HSP70_1"/>
    <property type="match status" value="1"/>
</dbReference>
<dbReference type="PROSITE" id="PS00329">
    <property type="entry name" value="HSP70_2"/>
    <property type="match status" value="1"/>
</dbReference>
<dbReference type="PROSITE" id="PS01036">
    <property type="entry name" value="HSP70_3"/>
    <property type="match status" value="1"/>
</dbReference>
<proteinExistence type="inferred from homology"/>
<name>DNAK_STRP1</name>
<accession>P0C0C6</accession>
<accession>P68836</accession>
<accession>P95831</accession>
<accession>Q48X09</accession>
<sequence length="608" mass="64920">MSKIIGIDLGTTNSAVAVLEGTESKIIANPEGNRTTPSVVSFKNGEIIVGDAAKRQAVTNPETVISIKSKMGTSEKVSANGKEYTPQEISAMILQYLKGYAEDYLGEKVEKAVITVPAYFNDAQRQATKDAGKIAGLEVERIVNEPTAAALAYGMDKTDKDEKILVFDLGGGTFDVSILELGDGVFDVLATAGDNKLGGDDFDQKIIDFLVAEFKKENGIDLSQDKMALQRLKDAAEKAKKDLSGVTQTQISLPFITAGSAGPLHLEMSLSRAKFDDLTRDLVERTKTPVRQALSDAGLSLSEIDEVILVGGSTRIPAVVEAVKAETGKEPNKSVNPDEVVAMGAAIQGGVITGDVKDVVLLDVTPLSLGIETMGGVFTKLIDRNTTIPTSKSQVFSTAADNQPAVDIHVLQGERPMAADNKTLGRFQLTDIPAAPRGIPQIEVTFDIDKNGIVSVKAKDLGTQKEQHIVIKSNDGLSEEEIDRMMKDAEANAEADAKRKEEVDLKNEVDQAIFATEKTIKETEGKGFDTERDAAQSALDELKAAQESGNLDDMKAKLEALNEKAQALAVKMYEQAAAAQQAAQGAEGAQANDSANNDDVVDGEFTEK</sequence>
<feature type="initiator methionine" description="Removed" evidence="1">
    <location>
        <position position="1"/>
    </location>
</feature>
<feature type="chain" id="PRO_0000078556" description="Chaperone protein DnaK">
    <location>
        <begin position="2"/>
        <end position="608"/>
    </location>
</feature>
<feature type="region of interest" description="Disordered" evidence="2">
    <location>
        <begin position="578"/>
        <end position="608"/>
    </location>
</feature>
<feature type="compositionally biased region" description="Low complexity" evidence="2">
    <location>
        <begin position="578"/>
        <end position="598"/>
    </location>
</feature>
<feature type="compositionally biased region" description="Acidic residues" evidence="2">
    <location>
        <begin position="599"/>
        <end position="608"/>
    </location>
</feature>
<feature type="modified residue" description="Phosphothreonine; by autocatalysis" evidence="1">
    <location>
        <position position="173"/>
    </location>
</feature>
<protein>
    <recommendedName>
        <fullName>Chaperone protein DnaK</fullName>
    </recommendedName>
    <alternativeName>
        <fullName>HSP70</fullName>
    </alternativeName>
    <alternativeName>
        <fullName>Heat shock 70 kDa protein</fullName>
    </alternativeName>
    <alternativeName>
        <fullName>Heat shock protein 70</fullName>
    </alternativeName>
</protein>
<reference key="1">
    <citation type="journal article" date="2001" name="Proc. Natl. Acad. Sci. U.S.A.">
        <title>Complete genome sequence of an M1 strain of Streptococcus pyogenes.</title>
        <authorList>
            <person name="Ferretti J.J."/>
            <person name="McShan W.M."/>
            <person name="Ajdic D.J."/>
            <person name="Savic D.J."/>
            <person name="Savic G."/>
            <person name="Lyon K."/>
            <person name="Primeaux C."/>
            <person name="Sezate S."/>
            <person name="Suvorov A.N."/>
            <person name="Kenton S."/>
            <person name="Lai H.S."/>
            <person name="Lin S.P."/>
            <person name="Qian Y."/>
            <person name="Jia H.G."/>
            <person name="Najar F.Z."/>
            <person name="Ren Q."/>
            <person name="Zhu H."/>
            <person name="Song L."/>
            <person name="White J."/>
            <person name="Yuan X."/>
            <person name="Clifton S.W."/>
            <person name="Roe B.A."/>
            <person name="McLaughlin R.E."/>
        </authorList>
    </citation>
    <scope>NUCLEOTIDE SEQUENCE [LARGE SCALE GENOMIC DNA]</scope>
    <source>
        <strain>ATCC 700294 / SF370 / Serotype M1</strain>
    </source>
</reference>
<reference key="2">
    <citation type="journal article" date="2005" name="J. Infect. Dis.">
        <title>Evolutionary origin and emergence of a highly successful clone of serotype M1 group A Streptococcus involved multiple horizontal gene transfer events.</title>
        <authorList>
            <person name="Sumby P."/>
            <person name="Porcella S.F."/>
            <person name="Madrigal A.G."/>
            <person name="Barbian K.D."/>
            <person name="Virtaneva K."/>
            <person name="Ricklefs S.M."/>
            <person name="Sturdevant D.E."/>
            <person name="Graham M.R."/>
            <person name="Vuopio-Varkila J."/>
            <person name="Hoe N.P."/>
            <person name="Musser J.M."/>
        </authorList>
    </citation>
    <scope>NUCLEOTIDE SEQUENCE [LARGE SCALE GENOMIC DNA]</scope>
    <source>
        <strain>ATCC BAA-947 / MGAS5005 / Serotype M1</strain>
    </source>
</reference>
<comment type="function">
    <text evidence="1">Acts as a chaperone.</text>
</comment>
<comment type="induction">
    <text evidence="1">By stress conditions e.g. heat shock (By similarity).</text>
</comment>
<comment type="similarity">
    <text evidence="3">Belongs to the heat shock protein 70 family.</text>
</comment>
<evidence type="ECO:0000250" key="1"/>
<evidence type="ECO:0000256" key="2">
    <source>
        <dbReference type="SAM" id="MobiDB-lite"/>
    </source>
</evidence>
<evidence type="ECO:0000305" key="3"/>
<keyword id="KW-0067">ATP-binding</keyword>
<keyword id="KW-0143">Chaperone</keyword>
<keyword id="KW-0547">Nucleotide-binding</keyword>
<keyword id="KW-0597">Phosphoprotein</keyword>
<keyword id="KW-1185">Reference proteome</keyword>
<keyword id="KW-0346">Stress response</keyword>
<organism>
    <name type="scientific">Streptococcus pyogenes serotype M1</name>
    <dbReference type="NCBI Taxonomy" id="301447"/>
    <lineage>
        <taxon>Bacteria</taxon>
        <taxon>Bacillati</taxon>
        <taxon>Bacillota</taxon>
        <taxon>Bacilli</taxon>
        <taxon>Lactobacillales</taxon>
        <taxon>Streptococcaceae</taxon>
        <taxon>Streptococcus</taxon>
    </lineage>
</organism>